<evidence type="ECO:0000250" key="1"/>
<evidence type="ECO:0000255" key="2">
    <source>
        <dbReference type="PROSITE-ProRule" id="PRU00560"/>
    </source>
</evidence>
<evidence type="ECO:0000255" key="3">
    <source>
        <dbReference type="PROSITE-ProRule" id="PRU00617"/>
    </source>
</evidence>
<evidence type="ECO:0000256" key="4">
    <source>
        <dbReference type="SAM" id="MobiDB-lite"/>
    </source>
</evidence>
<evidence type="ECO:0000269" key="5">
    <source>
    </source>
</evidence>
<evidence type="ECO:0000305" key="6"/>
<evidence type="ECO:0007744" key="7">
    <source>
    </source>
</evidence>
<evidence type="ECO:0007829" key="8">
    <source>
        <dbReference type="PDB" id="3V62"/>
    </source>
</evidence>
<proteinExistence type="evidence at protein level"/>
<keyword id="KW-0002">3D-structure</keyword>
<keyword id="KW-0067">ATP-binding</keyword>
<keyword id="KW-0227">DNA damage</keyword>
<keyword id="KW-0234">DNA repair</keyword>
<keyword id="KW-0238">DNA-binding</keyword>
<keyword id="KW-0347">Helicase</keyword>
<keyword id="KW-0378">Hydrolase</keyword>
<keyword id="KW-0413">Isomerase</keyword>
<keyword id="KW-0547">Nucleotide-binding</keyword>
<keyword id="KW-0539">Nucleus</keyword>
<keyword id="KW-0597">Phosphoprotein</keyword>
<keyword id="KW-1185">Reference proteome</keyword>
<sequence>MSSNNDLWLHLVSQLNTQQRAAALFDYTRGLQVIAGPGTGKTKVLTSRVAYLILHHHIHPRDIIVTTFTNKAANEMKERLQEMLRGAGVNISELLIGTFHSICLKILYRFGHLVDLQKDWRIIDEKEIDVILDDMIEKVPDQIRDYASSITRKVNLCMPSKNGDEWTIHPKLIKKQISKLKSNAILPEEYILDSNHDAALGYFYQIYQSELSKKNTLDFDDLLMYTFRLLTRVRVLSNIKHVLVDEFQDTNGIQLDLMFLFAKGNHHLSRGMTIVGDPDQSIYAFRNALAHNFLEMGRKCPIEYSTIILVENYRSSQKILNTSEILITQQNKGRQNRAPLRAQFDLDFPPVYMNFPAYFLEAPSLVRELLYLKALPNLFTFNDFAILVRQRRQIKRIESALIEHRIPYKIIRGHSFWDSKETRAMLNLLKLIFSPNDKHAILASLLYPARGLGPATGEKIKNALDTLATDVSCFQILKDISSKKIMLDIPTKGRSVIADFISMIENCQLLLQSTLLGGLSDLFDKLYELSGLKYEYLYKDGKKKNDQLEKSEPNLLNARHKNIELLKNYFLALLSKSESSDKEKNEAIKAATDEAEPIENKVITPKEYLRNFFNSLSLHSDAAEEEESESNKDAKIKREKNGFVTISTIHGAKGLEWPVVFIPGCEEGIIPCVFNDDKKDESEEDEEEDQENSKKDASPKKTRVLSVEDSIDEERRMFFVAQTRAKYLLYLSNTVTVEDVDRPRIASRFLTTDLIKAMSDSQKLFESTNSIKKLYRILNKKPPAEDDKLFSLDQLRKDYNQFIENRRERMIWQGIQMNDVYGIQLSRNKLLGSVSDFTSAADQLRLETQNSIFPQKKLIEKSRPSKINGNYAPKSRVKSPEKRYAPETTSFHSPTKKKVYAPQYVSTTNVPSRQEFHSSTGKNIPFLRREDRSITDISPRSSTRSLKGASPNKTSHMSDDLMRPSPTRKDKVTRNIHFATAGTFRIETQSNVDELHPPEYSNKSGQSLTSSEFSGFSSACSNSDQPTNLIEDINNELDLSDEELLNDISIERRRELLGSKKTKKIKPKTRNRKSKRGDKVKVEEVIDLKSEFEEDDSRNTTAAELLHNPDDTTVDNRPIISNAKFLADAAMKKTQKFSKKVKNEPASSQMDIFSQLSRAKKKSKLNNGEIIVID</sequence>
<gene>
    <name type="primary">SRS2</name>
    <name type="synonym">HPR5</name>
    <name type="synonym">RADH</name>
    <name type="ordered locus">YJL092W</name>
    <name type="ORF">J0913</name>
</gene>
<dbReference type="EC" id="5.6.2.4"/>
<dbReference type="EMBL" id="X15665">
    <property type="protein sequence ID" value="CAA33706.1"/>
    <property type="molecule type" value="Genomic_DNA"/>
</dbReference>
<dbReference type="EMBL" id="X77087">
    <property type="protein sequence ID" value="CAA54361.1"/>
    <property type="molecule type" value="Genomic_DNA"/>
</dbReference>
<dbReference type="EMBL" id="Z49367">
    <property type="protein sequence ID" value="CAA89385.1"/>
    <property type="molecule type" value="Genomic_DNA"/>
</dbReference>
<dbReference type="EMBL" id="BK006943">
    <property type="protein sequence ID" value="DAA08708.1"/>
    <property type="molecule type" value="Genomic_DNA"/>
</dbReference>
<dbReference type="PIR" id="S46586">
    <property type="entry name" value="HJBYDH"/>
</dbReference>
<dbReference type="RefSeq" id="NP_012443.1">
    <property type="nucleotide sequence ID" value="NM_001181525.1"/>
</dbReference>
<dbReference type="PDB" id="3V62">
    <property type="method" value="X-ray"/>
    <property type="resolution" value="2.90 A"/>
    <property type="chains" value="C/F=1107-1174"/>
</dbReference>
<dbReference type="PDBsum" id="3V62"/>
<dbReference type="SMR" id="P12954"/>
<dbReference type="BioGRID" id="33665">
    <property type="interactions" value="603"/>
</dbReference>
<dbReference type="DIP" id="DIP-415N"/>
<dbReference type="FunCoup" id="P12954">
    <property type="interactions" value="350"/>
</dbReference>
<dbReference type="IntAct" id="P12954">
    <property type="interactions" value="22"/>
</dbReference>
<dbReference type="MINT" id="P12954"/>
<dbReference type="STRING" id="4932.YJL092W"/>
<dbReference type="iPTMnet" id="P12954"/>
<dbReference type="PaxDb" id="4932-YJL092W"/>
<dbReference type="PeptideAtlas" id="P12954"/>
<dbReference type="EnsemblFungi" id="YJL092W_mRNA">
    <property type="protein sequence ID" value="YJL092W"/>
    <property type="gene ID" value="YJL092W"/>
</dbReference>
<dbReference type="GeneID" id="853353"/>
<dbReference type="KEGG" id="sce:YJL092W"/>
<dbReference type="AGR" id="SGD:S000003628"/>
<dbReference type="SGD" id="S000003628">
    <property type="gene designation" value="SRS2"/>
</dbReference>
<dbReference type="VEuPathDB" id="FungiDB:YJL092W"/>
<dbReference type="eggNOG" id="KOG2108">
    <property type="taxonomic scope" value="Eukaryota"/>
</dbReference>
<dbReference type="GeneTree" id="ENSGT00390000011669"/>
<dbReference type="HOGENOM" id="CLU_004585_4_0_1"/>
<dbReference type="InParanoid" id="P12954"/>
<dbReference type="OMA" id="FFVAQTR"/>
<dbReference type="OrthoDB" id="1470711at2759"/>
<dbReference type="BioCyc" id="YEAST:G3O-31547-MONOMER"/>
<dbReference type="BioGRID-ORCS" id="853353">
    <property type="hits" value="2 hits in 10 CRISPR screens"/>
</dbReference>
<dbReference type="PRO" id="PR:P12954"/>
<dbReference type="Proteomes" id="UP000002311">
    <property type="component" value="Chromosome X"/>
</dbReference>
<dbReference type="RNAct" id="P12954">
    <property type="molecule type" value="protein"/>
</dbReference>
<dbReference type="GO" id="GO:0005634">
    <property type="term" value="C:nucleus"/>
    <property type="evidence" value="ECO:0000314"/>
    <property type="project" value="SGD"/>
</dbReference>
<dbReference type="GO" id="GO:0043138">
    <property type="term" value="F:3'-5' DNA helicase activity"/>
    <property type="evidence" value="ECO:0000314"/>
    <property type="project" value="SGD"/>
</dbReference>
<dbReference type="GO" id="GO:0005524">
    <property type="term" value="F:ATP binding"/>
    <property type="evidence" value="ECO:0007669"/>
    <property type="project" value="UniProtKB-KW"/>
</dbReference>
<dbReference type="GO" id="GO:0016887">
    <property type="term" value="F:ATP hydrolysis activity"/>
    <property type="evidence" value="ECO:0007669"/>
    <property type="project" value="RHEA"/>
</dbReference>
<dbReference type="GO" id="GO:0003677">
    <property type="term" value="F:DNA binding"/>
    <property type="evidence" value="ECO:0007669"/>
    <property type="project" value="UniProtKB-KW"/>
</dbReference>
<dbReference type="GO" id="GO:0008047">
    <property type="term" value="F:enzyme activator activity"/>
    <property type="evidence" value="ECO:0000314"/>
    <property type="project" value="SGD"/>
</dbReference>
<dbReference type="GO" id="GO:0042262">
    <property type="term" value="P:DNA protection"/>
    <property type="evidence" value="ECO:0000315"/>
    <property type="project" value="SGD"/>
</dbReference>
<dbReference type="GO" id="GO:1990986">
    <property type="term" value="P:DNA recombinase disassembly"/>
    <property type="evidence" value="ECO:0000314"/>
    <property type="project" value="SGD"/>
</dbReference>
<dbReference type="GO" id="GO:0006281">
    <property type="term" value="P:DNA repair"/>
    <property type="evidence" value="ECO:0000316"/>
    <property type="project" value="SGD"/>
</dbReference>
<dbReference type="GO" id="GO:0006303">
    <property type="term" value="P:double-strand break repair via nonhomologous end joining"/>
    <property type="evidence" value="ECO:0000314"/>
    <property type="project" value="SGD"/>
</dbReference>
<dbReference type="GO" id="GO:0007127">
    <property type="term" value="P:meiosis I"/>
    <property type="evidence" value="ECO:0000315"/>
    <property type="project" value="SGD"/>
</dbReference>
<dbReference type="GO" id="GO:0045910">
    <property type="term" value="P:negative regulation of DNA recombination"/>
    <property type="evidence" value="ECO:0000315"/>
    <property type="project" value="SGD"/>
</dbReference>
<dbReference type="GO" id="GO:2000042">
    <property type="term" value="P:negative regulation of double-strand break repair via homologous recombination"/>
    <property type="evidence" value="ECO:0000314"/>
    <property type="project" value="SGD"/>
</dbReference>
<dbReference type="GO" id="GO:0000725">
    <property type="term" value="P:recombinational repair"/>
    <property type="evidence" value="ECO:0000318"/>
    <property type="project" value="GO_Central"/>
</dbReference>
<dbReference type="CDD" id="cd17932">
    <property type="entry name" value="DEXQc_UvrD"/>
    <property type="match status" value="1"/>
</dbReference>
<dbReference type="CDD" id="cd18807">
    <property type="entry name" value="SF1_C_UvrD"/>
    <property type="match status" value="1"/>
</dbReference>
<dbReference type="CDD" id="cd22877">
    <property type="entry name" value="Srs2_C"/>
    <property type="match status" value="1"/>
</dbReference>
<dbReference type="FunFam" id="3.40.50.300:FF:001201">
    <property type="entry name" value="ATP-dependent DNA helicase UvrD2"/>
    <property type="match status" value="1"/>
</dbReference>
<dbReference type="Gene3D" id="1.10.10.160">
    <property type="match status" value="1"/>
</dbReference>
<dbReference type="Gene3D" id="3.40.50.300">
    <property type="entry name" value="P-loop containing nucleotide triphosphate hydrolases"/>
    <property type="match status" value="3"/>
</dbReference>
<dbReference type="Gene3D" id="1.10.486.10">
    <property type="entry name" value="PCRA, domain 4"/>
    <property type="match status" value="2"/>
</dbReference>
<dbReference type="InterPro" id="IPR013986">
    <property type="entry name" value="DExx_box_DNA_helicase_dom_sf"/>
</dbReference>
<dbReference type="InterPro" id="IPR014017">
    <property type="entry name" value="DNA_helicase_UvrD-like_C"/>
</dbReference>
<dbReference type="InterPro" id="IPR000212">
    <property type="entry name" value="DNA_helicase_UvrD/REP"/>
</dbReference>
<dbReference type="InterPro" id="IPR027417">
    <property type="entry name" value="P-loop_NTPase"/>
</dbReference>
<dbReference type="InterPro" id="IPR014016">
    <property type="entry name" value="UvrD-like_ATP-bd"/>
</dbReference>
<dbReference type="PANTHER" id="PTHR11070:SF2">
    <property type="entry name" value="ATP-DEPENDENT DNA HELICASE SRS2"/>
    <property type="match status" value="1"/>
</dbReference>
<dbReference type="PANTHER" id="PTHR11070">
    <property type="entry name" value="UVRD / RECB / PCRA DNA HELICASE FAMILY MEMBER"/>
    <property type="match status" value="1"/>
</dbReference>
<dbReference type="Pfam" id="PF00580">
    <property type="entry name" value="UvrD-helicase"/>
    <property type="match status" value="1"/>
</dbReference>
<dbReference type="Pfam" id="PF13361">
    <property type="entry name" value="UvrD_C"/>
    <property type="match status" value="1"/>
</dbReference>
<dbReference type="SUPFAM" id="SSF52540">
    <property type="entry name" value="P-loop containing nucleoside triphosphate hydrolases"/>
    <property type="match status" value="1"/>
</dbReference>
<dbReference type="PROSITE" id="PS51198">
    <property type="entry name" value="UVRD_HELICASE_ATP_BIND"/>
    <property type="match status" value="1"/>
</dbReference>
<dbReference type="PROSITE" id="PS51217">
    <property type="entry name" value="UVRD_HELICASE_CTER"/>
    <property type="match status" value="1"/>
</dbReference>
<organism>
    <name type="scientific">Saccharomyces cerevisiae (strain ATCC 204508 / S288c)</name>
    <name type="common">Baker's yeast</name>
    <dbReference type="NCBI Taxonomy" id="559292"/>
    <lineage>
        <taxon>Eukaryota</taxon>
        <taxon>Fungi</taxon>
        <taxon>Dikarya</taxon>
        <taxon>Ascomycota</taxon>
        <taxon>Saccharomycotina</taxon>
        <taxon>Saccharomycetes</taxon>
        <taxon>Saccharomycetales</taxon>
        <taxon>Saccharomycetaceae</taxon>
        <taxon>Saccharomyces</taxon>
    </lineage>
</organism>
<protein>
    <recommendedName>
        <fullName>ATP-dependent DNA helicase SRS2</fullName>
        <ecNumber>5.6.2.4</ecNumber>
    </recommendedName>
    <alternativeName>
        <fullName evidence="6">DNA 3'-5' helicase SRS2</fullName>
    </alternativeName>
</protein>
<accession>P12954</accession>
<accession>D6VW92</accession>
<feature type="chain" id="PRO_0000102071" description="ATP-dependent DNA helicase SRS2">
    <location>
        <begin position="1"/>
        <end position="1174"/>
    </location>
</feature>
<feature type="domain" description="UvrD-like helicase ATP-binding" evidence="2">
    <location>
        <begin position="14"/>
        <end position="316"/>
    </location>
</feature>
<feature type="domain" description="UvrD-like helicase C-terminal" evidence="3">
    <location>
        <begin position="317"/>
        <end position="654"/>
    </location>
</feature>
<feature type="region of interest" description="Leucine-zipper">
    <location>
        <begin position="222"/>
        <end position="243"/>
    </location>
</feature>
<feature type="region of interest" description="Disordered" evidence="4">
    <location>
        <begin position="676"/>
        <end position="704"/>
    </location>
</feature>
<feature type="region of interest" description="Disordered" evidence="4">
    <location>
        <begin position="865"/>
        <end position="896"/>
    </location>
</feature>
<feature type="region of interest" description="Disordered" evidence="4">
    <location>
        <begin position="909"/>
        <end position="973"/>
    </location>
</feature>
<feature type="region of interest" description="Disordered" evidence="4">
    <location>
        <begin position="994"/>
        <end position="1024"/>
    </location>
</feature>
<feature type="compositionally biased region" description="Polar residues" evidence="4">
    <location>
        <begin position="909"/>
        <end position="922"/>
    </location>
</feature>
<feature type="compositionally biased region" description="Polar residues" evidence="4">
    <location>
        <begin position="935"/>
        <end position="955"/>
    </location>
</feature>
<feature type="compositionally biased region" description="Basic and acidic residues" evidence="4">
    <location>
        <begin position="956"/>
        <end position="973"/>
    </location>
</feature>
<feature type="compositionally biased region" description="Low complexity" evidence="4">
    <location>
        <begin position="1007"/>
        <end position="1023"/>
    </location>
</feature>
<feature type="binding site" evidence="2">
    <location>
        <begin position="38"/>
        <end position="43"/>
    </location>
    <ligand>
        <name>ATP</name>
        <dbReference type="ChEBI" id="CHEBI:30616"/>
    </ligand>
</feature>
<feature type="binding site" evidence="1">
    <location>
        <position position="314"/>
    </location>
    <ligand>
        <name>ATP</name>
        <dbReference type="ChEBI" id="CHEBI:30616"/>
    </ligand>
</feature>
<feature type="modified residue" description="Phosphoserine" evidence="7">
    <location>
        <position position="833"/>
    </location>
</feature>
<feature type="sequence conflict" description="In Ref. 1." evidence="6" ref="1">
    <original>IKKQISKLKS</original>
    <variation>TQETDIKAKI</variation>
    <location>
        <begin position="173"/>
        <end position="182"/>
    </location>
</feature>
<feature type="sequence conflict" description="In Ref. 1." evidence="6" ref="1">
    <original>YEYLYKDGKKKNDQL</original>
    <variation>VRILGTRMVRKKMSQF</variation>
    <location>
        <begin position="534"/>
        <end position="548"/>
    </location>
</feature>
<feature type="helix" evidence="8">
    <location>
        <begin position="1152"/>
        <end position="1160"/>
    </location>
</feature>
<feature type="strand" evidence="8">
    <location>
        <begin position="1170"/>
        <end position="1172"/>
    </location>
</feature>
<reference key="1">
    <citation type="journal article" date="1989" name="Nucleic Acids Res.">
        <title>RADH, a gene of Saccharomyces cerevisiae encoding a putative DNA helicase involved in DNA repair. Characteristics of radH mutants and sequence of the gene.</title>
        <authorList>
            <person name="Aboussekhra A."/>
            <person name="Chanet R."/>
            <person name="Zgaga Z."/>
            <person name="Cassier-Chauvat C."/>
            <person name="Heude M."/>
            <person name="Fabre C.L."/>
        </authorList>
    </citation>
    <scope>NUCLEOTIDE SEQUENCE [GENOMIC DNA]</scope>
    <source>
        <strain>S288c / GRF88</strain>
    </source>
</reference>
<reference key="2">
    <citation type="journal article" date="1994" name="Yeast">
        <title>Sequence and function analysis of a 9.46 kb fragment of Saccharomyces cerevisiae chromosome X.</title>
        <authorList>
            <person name="Miosga T."/>
            <person name="Witzel A."/>
            <person name="Zimmermann F.K."/>
        </authorList>
    </citation>
    <scope>NUCLEOTIDE SEQUENCE [GENOMIC DNA]</scope>
    <source>
        <strain>ATCC 204508 / S288c</strain>
    </source>
</reference>
<reference key="3">
    <citation type="journal article" date="1996" name="EMBO J.">
        <title>Complete nucleotide sequence of Saccharomyces cerevisiae chromosome X.</title>
        <authorList>
            <person name="Galibert F."/>
            <person name="Alexandraki D."/>
            <person name="Baur A."/>
            <person name="Boles E."/>
            <person name="Chalwatzis N."/>
            <person name="Chuat J.-C."/>
            <person name="Coster F."/>
            <person name="Cziepluch C."/>
            <person name="de Haan M."/>
            <person name="Domdey H."/>
            <person name="Durand P."/>
            <person name="Entian K.-D."/>
            <person name="Gatius M."/>
            <person name="Goffeau A."/>
            <person name="Grivell L.A."/>
            <person name="Hennemann A."/>
            <person name="Herbert C.J."/>
            <person name="Heumann K."/>
            <person name="Hilger F."/>
            <person name="Hollenberg C.P."/>
            <person name="Huang M.-E."/>
            <person name="Jacq C."/>
            <person name="Jauniaux J.-C."/>
            <person name="Katsoulou C."/>
            <person name="Kirchrath L."/>
            <person name="Kleine K."/>
            <person name="Kordes E."/>
            <person name="Koetter P."/>
            <person name="Liebl S."/>
            <person name="Louis E.J."/>
            <person name="Manus V."/>
            <person name="Mewes H.-W."/>
            <person name="Miosga T."/>
            <person name="Obermaier B."/>
            <person name="Perea J."/>
            <person name="Pohl T.M."/>
            <person name="Portetelle D."/>
            <person name="Pujol A."/>
            <person name="Purnelle B."/>
            <person name="Ramezani Rad M."/>
            <person name="Rasmussen S.W."/>
            <person name="Rose M."/>
            <person name="Rossau R."/>
            <person name="Schaaff-Gerstenschlaeger I."/>
            <person name="Smits P.H.M."/>
            <person name="Scarcez T."/>
            <person name="Soriano N."/>
            <person name="To Van D."/>
            <person name="Tzermia M."/>
            <person name="Van Broekhoven A."/>
            <person name="Vandenbol M."/>
            <person name="Wedler H."/>
            <person name="von Wettstein D."/>
            <person name="Wambutt R."/>
            <person name="Zagulski M."/>
            <person name="Zollner A."/>
            <person name="Karpfinger-Hartl L."/>
        </authorList>
    </citation>
    <scope>NUCLEOTIDE SEQUENCE [LARGE SCALE GENOMIC DNA]</scope>
    <source>
        <strain>ATCC 204508 / S288c</strain>
    </source>
</reference>
<reference key="4">
    <citation type="journal article" date="2014" name="G3 (Bethesda)">
        <title>The reference genome sequence of Saccharomyces cerevisiae: Then and now.</title>
        <authorList>
            <person name="Engel S.R."/>
            <person name="Dietrich F.S."/>
            <person name="Fisk D.G."/>
            <person name="Binkley G."/>
            <person name="Balakrishnan R."/>
            <person name="Costanzo M.C."/>
            <person name="Dwight S.S."/>
            <person name="Hitz B.C."/>
            <person name="Karra K."/>
            <person name="Nash R.S."/>
            <person name="Weng S."/>
            <person name="Wong E.D."/>
            <person name="Lloyd P."/>
            <person name="Skrzypek M.S."/>
            <person name="Miyasato S.R."/>
            <person name="Simison M."/>
            <person name="Cherry J.M."/>
        </authorList>
    </citation>
    <scope>GENOME REANNOTATION</scope>
    <source>
        <strain>ATCC 204508 / S288c</strain>
    </source>
</reference>
<reference key="5">
    <citation type="journal article" date="1993" name="J. Biol. Chem.">
        <title>Purification and characterization of the SRS2 DNA helicase of the yeast Saccharomyces cerevisiae.</title>
        <authorList>
            <person name="Rong L."/>
            <person name="Klein H.L."/>
        </authorList>
    </citation>
    <scope>CHARACTERIZATION</scope>
</reference>
<reference key="6">
    <citation type="journal article" date="2003" name="Nature">
        <title>Global analysis of protein expression in yeast.</title>
        <authorList>
            <person name="Ghaemmaghami S."/>
            <person name="Huh W.-K."/>
            <person name="Bower K."/>
            <person name="Howson R.W."/>
            <person name="Belle A."/>
            <person name="Dephoure N."/>
            <person name="O'Shea E.K."/>
            <person name="Weissman J.S."/>
        </authorList>
    </citation>
    <scope>LEVEL OF PROTEIN EXPRESSION [LARGE SCALE ANALYSIS]</scope>
</reference>
<reference key="7">
    <citation type="journal article" date="2007" name="Proc. Natl. Acad. Sci. U.S.A.">
        <title>Analysis of phosphorylation sites on proteins from Saccharomyces cerevisiae by electron transfer dissociation (ETD) mass spectrometry.</title>
        <authorList>
            <person name="Chi A."/>
            <person name="Huttenhower C."/>
            <person name="Geer L.Y."/>
            <person name="Coon J.J."/>
            <person name="Syka J.E.P."/>
            <person name="Bai D.L."/>
            <person name="Shabanowitz J."/>
            <person name="Burke D.J."/>
            <person name="Troyanskaya O.G."/>
            <person name="Hunt D.F."/>
        </authorList>
    </citation>
    <scope>IDENTIFICATION BY MASS SPECTROMETRY [LARGE SCALE ANALYSIS]</scope>
</reference>
<reference key="8">
    <citation type="journal article" date="2008" name="Mol. Cell. Proteomics">
        <title>A multidimensional chromatography technology for in-depth phosphoproteome analysis.</title>
        <authorList>
            <person name="Albuquerque C.P."/>
            <person name="Smolka M.B."/>
            <person name="Payne S.H."/>
            <person name="Bafna V."/>
            <person name="Eng J."/>
            <person name="Zhou H."/>
        </authorList>
    </citation>
    <scope>PHOSPHORYLATION [LARGE SCALE ANALYSIS] AT SER-833</scope>
    <scope>IDENTIFICATION BY MASS SPECTROMETRY [LARGE SCALE ANALYSIS]</scope>
</reference>
<comment type="function">
    <text>ATP-dependent DNA helicase involved in DNA repair at least for UV-induced lesions. The polarity of the helicase activity was determined to be 3' to 5'.</text>
</comment>
<comment type="catalytic activity">
    <reaction>
        <text>Couples ATP hydrolysis with the unwinding of duplex DNA by translocating in the 3'-5' direction.</text>
        <dbReference type="EC" id="5.6.2.4"/>
    </reaction>
</comment>
<comment type="catalytic activity">
    <reaction>
        <text>ATP + H2O = ADP + phosphate + H(+)</text>
        <dbReference type="Rhea" id="RHEA:13065"/>
        <dbReference type="ChEBI" id="CHEBI:15377"/>
        <dbReference type="ChEBI" id="CHEBI:15378"/>
        <dbReference type="ChEBI" id="CHEBI:30616"/>
        <dbReference type="ChEBI" id="CHEBI:43474"/>
        <dbReference type="ChEBI" id="CHEBI:456216"/>
        <dbReference type="EC" id="5.6.2.4"/>
    </reaction>
</comment>
<comment type="interaction">
    <interactant intactId="EBI-18110">
        <id>P12954</id>
    </interactant>
    <interactant intactId="EBI-6194">
        <id>P39009</id>
        <label>DUN1</label>
    </interactant>
    <organismsDiffer>false</organismsDiffer>
    <experiments>3</experiments>
</comment>
<comment type="interaction">
    <interactant intactId="EBI-18110">
        <id>P12954</id>
    </interactant>
    <interactant intactId="EBI-34047">
        <id>Q06148</id>
        <label>NEJ1</label>
    </interactant>
    <organismsDiffer>false</organismsDiffer>
    <experiments>3</experiments>
</comment>
<comment type="interaction">
    <interactant intactId="EBI-18110">
        <id>P12954</id>
    </interactant>
    <interactant intactId="EBI-12993">
        <id>P15873</id>
        <label>POL30</label>
    </interactant>
    <organismsDiffer>false</organismsDiffer>
    <experiments>10</experiments>
</comment>
<comment type="interaction">
    <interactant intactId="EBI-18110">
        <id>P12954</id>
    </interactant>
    <interactant intactId="EBI-14737">
        <id>P38953</id>
        <label>RAD55</label>
    </interactant>
    <organismsDiffer>false</organismsDiffer>
    <experiments>4</experiments>
</comment>
<comment type="interaction">
    <interactant intactId="EBI-18110">
        <id>P12954</id>
    </interactant>
    <interactant intactId="EBI-17490">
        <id>Q12306</id>
        <label>SMT3</label>
    </interactant>
    <organismsDiffer>false</organismsDiffer>
    <experiments>4</experiments>
</comment>
<comment type="subcellular location">
    <subcellularLocation>
        <location>Nucleus</location>
    </subcellularLocation>
</comment>
<comment type="miscellaneous">
    <text evidence="5">Present with 5190 molecules/cell in log phase SD medium.</text>
</comment>
<comment type="similarity">
    <text evidence="6">Belongs to the helicase family. UvrD subfamily.</text>
</comment>
<name>SRS2_YEAST</name>